<sequence>MAKTKSGGSTSNGRDSKGRRLGQKLGDGQFALAGSIIYRQRGTKIHPGENVGIGKDHTLYTLIDGYIKYAIKRNRKYASAFEERK</sequence>
<feature type="chain" id="PRO_0000181124" description="Large ribosomal subunit protein bL27">
    <location>
        <begin position="1"/>
        <end position="85"/>
    </location>
</feature>
<feature type="region of interest" description="Disordered" evidence="2">
    <location>
        <begin position="1"/>
        <end position="26"/>
    </location>
</feature>
<feature type="compositionally biased region" description="Polar residues" evidence="2">
    <location>
        <begin position="1"/>
        <end position="13"/>
    </location>
</feature>
<keyword id="KW-1185">Reference proteome</keyword>
<keyword id="KW-0687">Ribonucleoprotein</keyword>
<keyword id="KW-0689">Ribosomal protein</keyword>
<name>RL27_MYCM1</name>
<gene>
    <name evidence="1" type="primary">rpmA</name>
    <name type="ordered locus">MMOB3050</name>
</gene>
<evidence type="ECO:0000255" key="1">
    <source>
        <dbReference type="HAMAP-Rule" id="MF_00539"/>
    </source>
</evidence>
<evidence type="ECO:0000256" key="2">
    <source>
        <dbReference type="SAM" id="MobiDB-lite"/>
    </source>
</evidence>
<evidence type="ECO:0000305" key="3"/>
<organism>
    <name type="scientific">Mycoplasma mobile (strain ATCC 43663 / 163K / NCTC 11711)</name>
    <name type="common">Mesomycoplasma mobile</name>
    <dbReference type="NCBI Taxonomy" id="267748"/>
    <lineage>
        <taxon>Bacteria</taxon>
        <taxon>Bacillati</taxon>
        <taxon>Mycoplasmatota</taxon>
        <taxon>Mycoplasmoidales</taxon>
        <taxon>Metamycoplasmataceae</taxon>
        <taxon>Mesomycoplasma</taxon>
    </lineage>
</organism>
<proteinExistence type="inferred from homology"/>
<reference key="1">
    <citation type="journal article" date="2004" name="Genome Res.">
        <title>The complete genome and proteome of Mycoplasma mobile.</title>
        <authorList>
            <person name="Jaffe J.D."/>
            <person name="Stange-Thomann N."/>
            <person name="Smith C."/>
            <person name="DeCaprio D."/>
            <person name="Fisher S."/>
            <person name="Butler J."/>
            <person name="Calvo S."/>
            <person name="Elkins T."/>
            <person name="FitzGerald M.G."/>
            <person name="Hafez N."/>
            <person name="Kodira C.D."/>
            <person name="Major J."/>
            <person name="Wang S."/>
            <person name="Wilkinson J."/>
            <person name="Nicol R."/>
            <person name="Nusbaum C."/>
            <person name="Birren B."/>
            <person name="Berg H.C."/>
            <person name="Church G.M."/>
        </authorList>
    </citation>
    <scope>NUCLEOTIDE SEQUENCE [LARGE SCALE GENOMIC DNA]</scope>
    <source>
        <strain>ATCC 43663 / NCTC 11711 / 163 K</strain>
    </source>
</reference>
<dbReference type="EMBL" id="AE017308">
    <property type="protein sequence ID" value="AAT27791.1"/>
    <property type="molecule type" value="Genomic_DNA"/>
</dbReference>
<dbReference type="RefSeq" id="WP_011264825.1">
    <property type="nucleotide sequence ID" value="NC_006908.1"/>
</dbReference>
<dbReference type="SMR" id="Q6KHY5"/>
<dbReference type="STRING" id="267748.MMOB3050"/>
<dbReference type="KEGG" id="mmo:MMOB3050"/>
<dbReference type="eggNOG" id="COG0211">
    <property type="taxonomic scope" value="Bacteria"/>
</dbReference>
<dbReference type="HOGENOM" id="CLU_095424_4_1_14"/>
<dbReference type="OrthoDB" id="9803474at2"/>
<dbReference type="Proteomes" id="UP000009072">
    <property type="component" value="Chromosome"/>
</dbReference>
<dbReference type="GO" id="GO:0022625">
    <property type="term" value="C:cytosolic large ribosomal subunit"/>
    <property type="evidence" value="ECO:0007669"/>
    <property type="project" value="TreeGrafter"/>
</dbReference>
<dbReference type="GO" id="GO:0003735">
    <property type="term" value="F:structural constituent of ribosome"/>
    <property type="evidence" value="ECO:0007669"/>
    <property type="project" value="InterPro"/>
</dbReference>
<dbReference type="GO" id="GO:0006412">
    <property type="term" value="P:translation"/>
    <property type="evidence" value="ECO:0007669"/>
    <property type="project" value="UniProtKB-UniRule"/>
</dbReference>
<dbReference type="FunFam" id="2.40.50.100:FF:000020">
    <property type="entry name" value="50S ribosomal protein L27"/>
    <property type="match status" value="1"/>
</dbReference>
<dbReference type="Gene3D" id="2.40.50.100">
    <property type="match status" value="1"/>
</dbReference>
<dbReference type="HAMAP" id="MF_00539">
    <property type="entry name" value="Ribosomal_bL27"/>
    <property type="match status" value="1"/>
</dbReference>
<dbReference type="InterPro" id="IPR001684">
    <property type="entry name" value="Ribosomal_bL27"/>
</dbReference>
<dbReference type="InterPro" id="IPR018261">
    <property type="entry name" value="Ribosomal_bL27_CS"/>
</dbReference>
<dbReference type="NCBIfam" id="TIGR00062">
    <property type="entry name" value="L27"/>
    <property type="match status" value="1"/>
</dbReference>
<dbReference type="PANTHER" id="PTHR15893:SF0">
    <property type="entry name" value="LARGE RIBOSOMAL SUBUNIT PROTEIN BL27M"/>
    <property type="match status" value="1"/>
</dbReference>
<dbReference type="PANTHER" id="PTHR15893">
    <property type="entry name" value="RIBOSOMAL PROTEIN L27"/>
    <property type="match status" value="1"/>
</dbReference>
<dbReference type="Pfam" id="PF01016">
    <property type="entry name" value="Ribosomal_L27"/>
    <property type="match status" value="1"/>
</dbReference>
<dbReference type="PRINTS" id="PR00063">
    <property type="entry name" value="RIBOSOMALL27"/>
</dbReference>
<dbReference type="SUPFAM" id="SSF110324">
    <property type="entry name" value="Ribosomal L27 protein-like"/>
    <property type="match status" value="1"/>
</dbReference>
<dbReference type="PROSITE" id="PS00831">
    <property type="entry name" value="RIBOSOMAL_L27"/>
    <property type="match status" value="1"/>
</dbReference>
<accession>Q6KHY5</accession>
<comment type="similarity">
    <text evidence="1">Belongs to the bacterial ribosomal protein bL27 family.</text>
</comment>
<protein>
    <recommendedName>
        <fullName evidence="1">Large ribosomal subunit protein bL27</fullName>
    </recommendedName>
    <alternativeName>
        <fullName evidence="3">50S ribosomal protein L27</fullName>
    </alternativeName>
</protein>